<gene>
    <name type="primary">LYZ1</name>
</gene>
<accession>P04421</accession>
<reference key="1">
    <citation type="journal article" date="1989" name="J. Biol. Chem.">
        <title>Multiple cDNA sequences and the evolution of bovine stomach lysozyme.</title>
        <authorList>
            <person name="Irwin D.M."/>
            <person name="Wilson A.C."/>
        </authorList>
    </citation>
    <scope>NUCLEOTIDE SEQUENCE [MRNA]</scope>
</reference>
<reference key="2">
    <citation type="journal article" date="1984" name="J. Biol. Chem.">
        <title>Stomach lysozymes of ruminants. II. Amino acid sequence of cow lysozyme 2 and immunological comparisons with other lysozymes.</title>
        <authorList>
            <person name="Jolles P."/>
            <person name="Schoentgen F."/>
            <person name="Jolles J."/>
            <person name="Dobson D.E."/>
            <person name="Prager E.M."/>
            <person name="Wilson A.C."/>
        </authorList>
    </citation>
    <scope>PROTEIN SEQUENCE OF 19-147 (2B)</scope>
</reference>
<reference key="3">
    <citation type="journal article" date="1989" name="J. Mol. Evol.">
        <title>Episodic evolution in the stomach lysozymes of ruminants.</title>
        <authorList>
            <person name="Jolles J."/>
            <person name="Jolles P."/>
            <person name="Bowman B.H."/>
            <person name="Prager E.M."/>
            <person name="Stewart C.-B."/>
            <person name="Wilson A.C."/>
        </authorList>
    </citation>
    <scope>SEQUENCE REVISION TO 116 (2B)</scope>
</reference>
<proteinExistence type="evidence at protein level"/>
<sequence length="147" mass="16373">MKALVILGFLFLSVAVQGKVFERCELARTLKKLGLDGYKGVSLANWLCLTKWESSYNTKATNYNPSSESTDYGIFQINSKWWCNDGKTPNAVDGCHVSCRELMENDIAKAVACAKHIVSEQGITAWVAWKSHCRDHDVSSYVEGCTL</sequence>
<keyword id="KW-0929">Antimicrobial</keyword>
<keyword id="KW-0081">Bacteriolytic enzyme</keyword>
<keyword id="KW-0222">Digestion</keyword>
<keyword id="KW-0903">Direct protein sequencing</keyword>
<keyword id="KW-1015">Disulfide bond</keyword>
<keyword id="KW-0326">Glycosidase</keyword>
<keyword id="KW-0378">Hydrolase</keyword>
<keyword id="KW-1185">Reference proteome</keyword>
<keyword id="KW-0732">Signal</keyword>
<name>LYSC_BOVIN</name>
<feature type="signal peptide" evidence="2">
    <location>
        <begin position="1"/>
        <end position="18"/>
    </location>
</feature>
<feature type="chain" id="PRO_0000018453" description="Lysozyme C">
    <location>
        <begin position="19"/>
        <end position="147"/>
    </location>
</feature>
<feature type="domain" description="C-type lysozyme" evidence="1">
    <location>
        <begin position="19"/>
        <end position="147"/>
    </location>
</feature>
<feature type="active site" evidence="1">
    <location>
        <position position="53"/>
    </location>
</feature>
<feature type="active site" evidence="1">
    <location>
        <position position="71"/>
    </location>
</feature>
<feature type="disulfide bond" evidence="1">
    <location>
        <begin position="24"/>
        <end position="145"/>
    </location>
</feature>
<feature type="disulfide bond" evidence="1">
    <location>
        <begin position="48"/>
        <end position="133"/>
    </location>
</feature>
<feature type="disulfide bond" evidence="1">
    <location>
        <begin position="83"/>
        <end position="99"/>
    </location>
</feature>
<feature type="disulfide bond" evidence="1">
    <location>
        <begin position="95"/>
        <end position="113"/>
    </location>
</feature>
<feature type="sequence variant" description="In isozyme 2A.">
    <original>A</original>
    <variation>T</variation>
    <location>
        <position position="3"/>
    </location>
</feature>
<feature type="sequence variant" description="In isozyme 1 and isozyme 3.">
    <original>V</original>
    <variation>I</variation>
    <location>
        <position position="5"/>
    </location>
</feature>
<feature type="sequence variant" description="In isozyme 2C.">
    <original>Q</original>
    <variation>K</variation>
    <location>
        <position position="17"/>
    </location>
</feature>
<feature type="sequence variant" description="In isozyme 2D.">
    <original>N</original>
    <variation>S</variation>
    <location>
        <position position="45"/>
    </location>
</feature>
<feature type="sequence variant" description="In isozyme 1.">
    <original>S</original>
    <variation>G</variation>
    <location>
        <position position="66"/>
    </location>
</feature>
<feature type="sequence variant" description="In isozyme 1.">
    <original>D</original>
    <variation>E</variation>
    <location>
        <position position="106"/>
    </location>
</feature>
<feature type="sequence variant" description="In isozyme 1.">
    <original>H</original>
    <variation>Q</variation>
    <location>
        <position position="116"/>
    </location>
</feature>
<feature type="sequence variant" description="In isozyme 3.">
    <original>E</original>
    <variation>Q</variation>
    <location>
        <position position="143"/>
    </location>
</feature>
<evidence type="ECO:0000255" key="1">
    <source>
        <dbReference type="PROSITE-ProRule" id="PRU00680"/>
    </source>
</evidence>
<evidence type="ECO:0000269" key="2">
    <source>
    </source>
</evidence>
<organism>
    <name type="scientific">Bos taurus</name>
    <name type="common">Bovine</name>
    <dbReference type="NCBI Taxonomy" id="9913"/>
    <lineage>
        <taxon>Eukaryota</taxon>
        <taxon>Metazoa</taxon>
        <taxon>Chordata</taxon>
        <taxon>Craniata</taxon>
        <taxon>Vertebrata</taxon>
        <taxon>Euteleostomi</taxon>
        <taxon>Mammalia</taxon>
        <taxon>Eutheria</taxon>
        <taxon>Laurasiatheria</taxon>
        <taxon>Artiodactyla</taxon>
        <taxon>Ruminantia</taxon>
        <taxon>Pecora</taxon>
        <taxon>Bovidae</taxon>
        <taxon>Bovinae</taxon>
        <taxon>Bos</taxon>
    </lineage>
</organism>
<dbReference type="EC" id="3.2.1.17"/>
<dbReference type="EMBL" id="M26246">
    <property type="protein sequence ID" value="AAA30627.1"/>
    <property type="molecule type" value="mRNA"/>
</dbReference>
<dbReference type="EMBL" id="M26245">
    <property type="protein sequence ID" value="AAA30626.1"/>
    <property type="molecule type" value="mRNA"/>
</dbReference>
<dbReference type="EMBL" id="M26242">
    <property type="protein sequence ID" value="AAA30632.1"/>
    <property type="molecule type" value="mRNA"/>
</dbReference>
<dbReference type="EMBL" id="M26241">
    <property type="protein sequence ID" value="AAA30628.1"/>
    <property type="molecule type" value="mRNA"/>
</dbReference>
<dbReference type="EMBL" id="M26243">
    <property type="protein sequence ID" value="AAA30629.1"/>
    <property type="molecule type" value="mRNA"/>
</dbReference>
<dbReference type="EMBL" id="M26244">
    <property type="protein sequence ID" value="AAA30630.1"/>
    <property type="molecule type" value="mRNA"/>
</dbReference>
<dbReference type="EMBL" id="M26240">
    <property type="protein sequence ID" value="AAA30631.1"/>
    <property type="molecule type" value="mRNA"/>
</dbReference>
<dbReference type="RefSeq" id="NP_001073808.1">
    <property type="nucleotide sequence ID" value="NM_001080339.1"/>
</dbReference>
<dbReference type="SMR" id="P04421"/>
<dbReference type="FunCoup" id="P04421">
    <property type="interactions" value="17"/>
</dbReference>
<dbReference type="CAZy" id="GH22">
    <property type="family name" value="Glycoside Hydrolase Family 22"/>
</dbReference>
<dbReference type="GeneID" id="781349"/>
<dbReference type="KEGG" id="bta:280849"/>
<dbReference type="KEGG" id="bta:281289"/>
<dbReference type="KEGG" id="bta:781349"/>
<dbReference type="CTD" id="17105"/>
<dbReference type="CTD" id="77397"/>
<dbReference type="InParanoid" id="P04421"/>
<dbReference type="OrthoDB" id="9698384at2759"/>
<dbReference type="Proteomes" id="UP000009136">
    <property type="component" value="Unplaced"/>
</dbReference>
<dbReference type="GO" id="GO:0003796">
    <property type="term" value="F:lysozyme activity"/>
    <property type="evidence" value="ECO:0000318"/>
    <property type="project" value="GO_Central"/>
</dbReference>
<dbReference type="GO" id="GO:0050829">
    <property type="term" value="P:defense response to Gram-negative bacterium"/>
    <property type="evidence" value="ECO:0000318"/>
    <property type="project" value="GO_Central"/>
</dbReference>
<dbReference type="GO" id="GO:0050830">
    <property type="term" value="P:defense response to Gram-positive bacterium"/>
    <property type="evidence" value="ECO:0000318"/>
    <property type="project" value="GO_Central"/>
</dbReference>
<dbReference type="GO" id="GO:0007586">
    <property type="term" value="P:digestion"/>
    <property type="evidence" value="ECO:0007669"/>
    <property type="project" value="UniProtKB-KW"/>
</dbReference>
<dbReference type="GO" id="GO:0031640">
    <property type="term" value="P:killing of cells of another organism"/>
    <property type="evidence" value="ECO:0007669"/>
    <property type="project" value="UniProtKB-KW"/>
</dbReference>
<dbReference type="CDD" id="cd16897">
    <property type="entry name" value="LYZ_C"/>
    <property type="match status" value="1"/>
</dbReference>
<dbReference type="FunFam" id="1.10.530.10:FF:000001">
    <property type="entry name" value="Lysozyme C"/>
    <property type="match status" value="1"/>
</dbReference>
<dbReference type="Gene3D" id="1.10.530.10">
    <property type="match status" value="1"/>
</dbReference>
<dbReference type="InterPro" id="IPR001916">
    <property type="entry name" value="Glyco_hydro_22"/>
</dbReference>
<dbReference type="InterPro" id="IPR019799">
    <property type="entry name" value="Glyco_hydro_22_CS"/>
</dbReference>
<dbReference type="InterPro" id="IPR000974">
    <property type="entry name" value="Glyco_hydro_22_lys"/>
</dbReference>
<dbReference type="InterPro" id="IPR023346">
    <property type="entry name" value="Lysozyme-like_dom_sf"/>
</dbReference>
<dbReference type="PANTHER" id="PTHR11407">
    <property type="entry name" value="LYSOZYME C"/>
    <property type="match status" value="1"/>
</dbReference>
<dbReference type="PANTHER" id="PTHR11407:SF28">
    <property type="entry name" value="LYSOZYME C"/>
    <property type="match status" value="1"/>
</dbReference>
<dbReference type="Pfam" id="PF00062">
    <property type="entry name" value="Lys"/>
    <property type="match status" value="1"/>
</dbReference>
<dbReference type="PRINTS" id="PR00137">
    <property type="entry name" value="LYSOZYME"/>
</dbReference>
<dbReference type="PRINTS" id="PR00135">
    <property type="entry name" value="LYZLACT"/>
</dbReference>
<dbReference type="SMART" id="SM00263">
    <property type="entry name" value="LYZ1"/>
    <property type="match status" value="1"/>
</dbReference>
<dbReference type="SUPFAM" id="SSF53955">
    <property type="entry name" value="Lysozyme-like"/>
    <property type="match status" value="1"/>
</dbReference>
<dbReference type="PROSITE" id="PS00128">
    <property type="entry name" value="GLYCOSYL_HYDROL_F22_1"/>
    <property type="match status" value="1"/>
</dbReference>
<dbReference type="PROSITE" id="PS51348">
    <property type="entry name" value="GLYCOSYL_HYDROL_F22_2"/>
    <property type="match status" value="1"/>
</dbReference>
<protein>
    <recommendedName>
        <fullName>Lysozyme C</fullName>
        <ecNumber>3.2.1.17</ecNumber>
    </recommendedName>
    <alternativeName>
        <fullName>1,4-beta-N-acetylmuramidase C</fullName>
    </alternativeName>
</protein>
<comment type="function">
    <text>Lysozymes have primarily a bacteriolytic function; those in tissues and body fluids are associated with the monocyte-macrophage system and enhance the activity of immunoagents.</text>
</comment>
<comment type="catalytic activity">
    <reaction>
        <text>Hydrolysis of (1-&gt;4)-beta-linkages between N-acetylmuramic acid and N-acetyl-D-glucosamine residues in a peptidoglycan and between N-acetyl-D-glucosamine residues in chitodextrins.</text>
        <dbReference type="EC" id="3.2.1.17"/>
    </reaction>
</comment>
<comment type="subunit">
    <text>Monomer.</text>
</comment>
<comment type="tissue specificity">
    <text>Stomach-specific.</text>
</comment>
<comment type="miscellaneous">
    <text>Lysozyme C is capable of both hydrolysis and transglycosylation; it also shows a slight esterase activity. It acts rapidly on both peptide-substituted and unsubstituted peptidoglycan, and slowly on chitin oligosaccharides.</text>
</comment>
<comment type="miscellaneous">
    <text>The ruminant gastric lysozymes, which digest symbiotic bacteria coming with cud from the rumen, are much more resistant to inactivation by pepsin than are other lysozymes.</text>
</comment>
<comment type="miscellaneous">
    <text>Three non-allelic lysozymes C are present in the gastric mucosa of cattle.</text>
</comment>
<comment type="miscellaneous">
    <text>The sequence of isozyme 2B is shown.</text>
</comment>
<comment type="similarity">
    <text evidence="1">Belongs to the glycosyl hydrolase 22 family.</text>
</comment>